<dbReference type="EMBL" id="AB000459">
    <property type="protein sequence ID" value="BAA19116.1"/>
    <property type="molecule type" value="mRNA"/>
</dbReference>
<dbReference type="EMBL" id="AB000460">
    <property type="protein sequence ID" value="BAA19117.1"/>
    <property type="molecule type" value="mRNA"/>
</dbReference>
<dbReference type="EMBL" id="AB000461">
    <property type="protein sequence ID" value="BAA19118.1"/>
    <property type="status" value="ALT_SEQ"/>
    <property type="molecule type" value="mRNA"/>
</dbReference>
<dbReference type="EMBL" id="AB001563">
    <property type="protein sequence ID" value="BAA31858.1"/>
    <property type="molecule type" value="mRNA"/>
</dbReference>
<dbReference type="EMBL" id="AL110117">
    <property type="status" value="NOT_ANNOTATED_CDS"/>
    <property type="molecule type" value="Genomic_DNA"/>
</dbReference>
<dbReference type="EMBL" id="BC136646">
    <property type="protein sequence ID" value="AAI36647.1"/>
    <property type="molecule type" value="mRNA"/>
</dbReference>
<dbReference type="EMBL" id="BC144340">
    <property type="protein sequence ID" value="AAI44341.1"/>
    <property type="molecule type" value="mRNA"/>
</dbReference>
<dbReference type="EMBL" id="AF040966">
    <property type="protein sequence ID" value="AAB97012.1"/>
    <property type="molecule type" value="mRNA"/>
</dbReference>
<dbReference type="CCDS" id="CCDS33943.1">
    <molecule id="P78312-2"/>
</dbReference>
<dbReference type="CCDS" id="CCDS58874.1">
    <molecule id="P78312-5"/>
</dbReference>
<dbReference type="CCDS" id="CCDS58875.1">
    <molecule id="P78312-1"/>
</dbReference>
<dbReference type="CCDS" id="CCDS58876.1">
    <molecule id="P78312-6"/>
</dbReference>
<dbReference type="RefSeq" id="NP_001243595.1">
    <molecule id="P78312-1"/>
    <property type="nucleotide sequence ID" value="NM_001256666.2"/>
</dbReference>
<dbReference type="RefSeq" id="NP_001243596.1">
    <molecule id="P78312-5"/>
    <property type="nucleotide sequence ID" value="NM_001256667.2"/>
</dbReference>
<dbReference type="RefSeq" id="NP_001243597.1">
    <molecule id="P78312-6"/>
    <property type="nucleotide sequence ID" value="NM_001256668.2"/>
</dbReference>
<dbReference type="RefSeq" id="NP_003695.3">
    <molecule id="P78312-2"/>
    <property type="nucleotide sequence ID" value="NM_003704.3"/>
</dbReference>
<dbReference type="RefSeq" id="XP_006713993.2">
    <property type="nucleotide sequence ID" value="XM_006713930.2"/>
</dbReference>
<dbReference type="SMR" id="P78312"/>
<dbReference type="BioGRID" id="114163">
    <property type="interactions" value="71"/>
</dbReference>
<dbReference type="FunCoup" id="P78312">
    <property type="interactions" value="3306"/>
</dbReference>
<dbReference type="IntAct" id="P78312">
    <property type="interactions" value="21"/>
</dbReference>
<dbReference type="STRING" id="9606.ENSP00000324587"/>
<dbReference type="GlyCosmos" id="P78312">
    <property type="glycosylation" value="1 site, 1 glycan"/>
</dbReference>
<dbReference type="GlyGen" id="P78312">
    <property type="glycosylation" value="13 sites, 2 N-linked glycans (3 sites), 1 O-linked glycan (10 sites)"/>
</dbReference>
<dbReference type="iPTMnet" id="P78312"/>
<dbReference type="PhosphoSitePlus" id="P78312"/>
<dbReference type="BioMuta" id="FAM193A"/>
<dbReference type="DMDM" id="71152365"/>
<dbReference type="jPOST" id="P78312"/>
<dbReference type="MassIVE" id="P78312"/>
<dbReference type="PaxDb" id="9606-ENSP00000324587"/>
<dbReference type="PeptideAtlas" id="P78312"/>
<dbReference type="ProteomicsDB" id="20059"/>
<dbReference type="ProteomicsDB" id="57553">
    <molecule id="P78312-1"/>
</dbReference>
<dbReference type="ProteomicsDB" id="57554">
    <molecule id="P78312-2"/>
</dbReference>
<dbReference type="ProteomicsDB" id="57555">
    <molecule id="P78312-3"/>
</dbReference>
<dbReference type="ProteomicsDB" id="57556">
    <molecule id="P78312-4"/>
</dbReference>
<dbReference type="ProteomicsDB" id="7529"/>
<dbReference type="Pumba" id="P78312"/>
<dbReference type="Antibodypedia" id="50867">
    <property type="antibodies" value="18 antibodies from 9 providers"/>
</dbReference>
<dbReference type="DNASU" id="8603"/>
<dbReference type="Ensembl" id="ENST00000324666.9">
    <molecule id="P78312-1"/>
    <property type="protein sequence ID" value="ENSP00000324587.5"/>
    <property type="gene ID" value="ENSG00000125386.16"/>
</dbReference>
<dbReference type="Ensembl" id="ENST00000382839.7">
    <molecule id="P78312-2"/>
    <property type="protein sequence ID" value="ENSP00000372290.3"/>
    <property type="gene ID" value="ENSG00000125386.16"/>
</dbReference>
<dbReference type="Ensembl" id="ENST00000502458.5">
    <molecule id="P78312-5"/>
    <property type="protein sequence ID" value="ENSP00000427505.1"/>
    <property type="gene ID" value="ENSG00000125386.16"/>
</dbReference>
<dbReference type="Ensembl" id="ENST00000505311.5">
    <molecule id="P78312-6"/>
    <property type="protein sequence ID" value="ENSP00000421200.1"/>
    <property type="gene ID" value="ENSG00000125386.16"/>
</dbReference>
<dbReference type="Ensembl" id="ENST00000512465.5">
    <molecule id="P78312-3"/>
    <property type="protein sequence ID" value="ENSP00000423852.1"/>
    <property type="gene ID" value="ENSG00000125386.16"/>
</dbReference>
<dbReference type="Ensembl" id="ENST00000545951.5">
    <molecule id="P78312-6"/>
    <property type="protein sequence ID" value="ENSP00000443617.1"/>
    <property type="gene ID" value="ENSG00000125386.16"/>
</dbReference>
<dbReference type="GeneID" id="8603"/>
<dbReference type="KEGG" id="hsa:8603"/>
<dbReference type="UCSC" id="uc003gfd.4">
    <molecule id="P78312-1"/>
    <property type="organism name" value="human"/>
</dbReference>
<dbReference type="AGR" id="HGNC:16822"/>
<dbReference type="CTD" id="8603"/>
<dbReference type="DisGeNET" id="8603"/>
<dbReference type="GeneCards" id="FAM193A"/>
<dbReference type="HGNC" id="HGNC:16822">
    <property type="gene designation" value="FAM193A"/>
</dbReference>
<dbReference type="HPA" id="ENSG00000125386">
    <property type="expression patterns" value="Low tissue specificity"/>
</dbReference>
<dbReference type="MIM" id="620037">
    <property type="type" value="gene"/>
</dbReference>
<dbReference type="neXtProt" id="NX_P78312"/>
<dbReference type="OpenTargets" id="ENSG00000125386"/>
<dbReference type="PharmGKB" id="PA165663979"/>
<dbReference type="VEuPathDB" id="HostDB:ENSG00000125386"/>
<dbReference type="eggNOG" id="ENOG502QVAZ">
    <property type="taxonomic scope" value="Eukaryota"/>
</dbReference>
<dbReference type="GeneTree" id="ENSGT00390000000973"/>
<dbReference type="HOGENOM" id="CLU_003730_0_0_1"/>
<dbReference type="InParanoid" id="P78312"/>
<dbReference type="OMA" id="XALPPAP"/>
<dbReference type="OrthoDB" id="10044608at2759"/>
<dbReference type="PAN-GO" id="P78312">
    <property type="GO annotations" value="0 GO annotations based on evolutionary models"/>
</dbReference>
<dbReference type="PhylomeDB" id="P78312"/>
<dbReference type="TreeFam" id="TF330223"/>
<dbReference type="PathwayCommons" id="P78312"/>
<dbReference type="SignaLink" id="P78312"/>
<dbReference type="BioGRID-ORCS" id="8603">
    <property type="hits" value="16 hits in 1158 CRISPR screens"/>
</dbReference>
<dbReference type="CD-CODE" id="232F8A39">
    <property type="entry name" value="P-body"/>
</dbReference>
<dbReference type="CD-CODE" id="DEE660B4">
    <property type="entry name" value="Stress granule"/>
</dbReference>
<dbReference type="ChiTaRS" id="FAM193A">
    <property type="organism name" value="human"/>
</dbReference>
<dbReference type="GeneWiki" id="FAM193A"/>
<dbReference type="GenomeRNAi" id="8603"/>
<dbReference type="Pharos" id="P78312">
    <property type="development level" value="Tdark"/>
</dbReference>
<dbReference type="PRO" id="PR:P78312"/>
<dbReference type="Proteomes" id="UP000005640">
    <property type="component" value="Chromosome 4"/>
</dbReference>
<dbReference type="RNAct" id="P78312">
    <property type="molecule type" value="protein"/>
</dbReference>
<dbReference type="Bgee" id="ENSG00000125386">
    <property type="expression patterns" value="Expressed in sural nerve and 187 other cell types or tissues"/>
</dbReference>
<dbReference type="ExpressionAtlas" id="P78312">
    <property type="expression patterns" value="baseline and differential"/>
</dbReference>
<dbReference type="InterPro" id="IPR029717">
    <property type="entry name" value="FAM193"/>
</dbReference>
<dbReference type="InterPro" id="IPR031802">
    <property type="entry name" value="FAM193_C"/>
</dbReference>
<dbReference type="PANTHER" id="PTHR15109">
    <property type="entry name" value="AGAP004327-PA"/>
    <property type="match status" value="1"/>
</dbReference>
<dbReference type="PANTHER" id="PTHR15109:SF2">
    <property type="entry name" value="PROTEIN FAM193A"/>
    <property type="match status" value="1"/>
</dbReference>
<dbReference type="Pfam" id="PF15914">
    <property type="entry name" value="FAM193_C"/>
    <property type="match status" value="1"/>
</dbReference>
<gene>
    <name type="primary">FAM193A</name>
    <name type="synonym">C4orf8</name>
    <name type="ORF">RES4-22</name>
</gene>
<protein>
    <recommendedName>
        <fullName>Protein FAM193A</fullName>
    </recommendedName>
    <alternativeName>
        <fullName>Protein IT14</fullName>
    </alternativeName>
</protein>
<feature type="chain" id="PRO_0000089430" description="Protein FAM193A">
    <location>
        <begin position="1"/>
        <end position="1265"/>
    </location>
</feature>
<feature type="region of interest" description="Disordered" evidence="3">
    <location>
        <begin position="247"/>
        <end position="272"/>
    </location>
</feature>
<feature type="region of interest" description="Disordered" evidence="3">
    <location>
        <begin position="331"/>
        <end position="407"/>
    </location>
</feature>
<feature type="region of interest" description="Disordered" evidence="3">
    <location>
        <begin position="553"/>
        <end position="586"/>
    </location>
</feature>
<feature type="region of interest" description="Disordered" evidence="3">
    <location>
        <begin position="626"/>
        <end position="674"/>
    </location>
</feature>
<feature type="region of interest" description="Disordered" evidence="3">
    <location>
        <begin position="750"/>
        <end position="785"/>
    </location>
</feature>
<feature type="region of interest" description="Disordered" evidence="3">
    <location>
        <begin position="822"/>
        <end position="841"/>
    </location>
</feature>
<feature type="region of interest" description="Disordered" evidence="3">
    <location>
        <begin position="859"/>
        <end position="881"/>
    </location>
</feature>
<feature type="region of interest" description="Disordered" evidence="3">
    <location>
        <begin position="893"/>
        <end position="1163"/>
    </location>
</feature>
<feature type="coiled-coil region" evidence="2">
    <location>
        <begin position="107"/>
        <end position="142"/>
    </location>
</feature>
<feature type="coiled-coil region" evidence="2">
    <location>
        <begin position="873"/>
        <end position="932"/>
    </location>
</feature>
<feature type="coiled-coil region" evidence="2">
    <location>
        <begin position="1093"/>
        <end position="1118"/>
    </location>
</feature>
<feature type="compositionally biased region" description="Low complexity" evidence="3">
    <location>
        <begin position="255"/>
        <end position="271"/>
    </location>
</feature>
<feature type="compositionally biased region" description="Acidic residues" evidence="3">
    <location>
        <begin position="355"/>
        <end position="365"/>
    </location>
</feature>
<feature type="compositionally biased region" description="Acidic residues" evidence="3">
    <location>
        <begin position="757"/>
        <end position="769"/>
    </location>
</feature>
<feature type="compositionally biased region" description="Low complexity" evidence="3">
    <location>
        <begin position="772"/>
        <end position="781"/>
    </location>
</feature>
<feature type="compositionally biased region" description="Basic residues" evidence="3">
    <location>
        <begin position="868"/>
        <end position="877"/>
    </location>
</feature>
<feature type="compositionally biased region" description="Basic and acidic residues" evidence="3">
    <location>
        <begin position="893"/>
        <end position="905"/>
    </location>
</feature>
<feature type="compositionally biased region" description="Basic and acidic residues" evidence="3">
    <location>
        <begin position="915"/>
        <end position="929"/>
    </location>
</feature>
<feature type="compositionally biased region" description="Basic residues" evidence="3">
    <location>
        <begin position="931"/>
        <end position="940"/>
    </location>
</feature>
<feature type="compositionally biased region" description="Polar residues" evidence="3">
    <location>
        <begin position="953"/>
        <end position="973"/>
    </location>
</feature>
<feature type="compositionally biased region" description="Basic residues" evidence="3">
    <location>
        <begin position="1149"/>
        <end position="1159"/>
    </location>
</feature>
<feature type="modified residue" description="Phosphoserine" evidence="1">
    <location>
        <position position="293"/>
    </location>
</feature>
<feature type="modified residue" description="Phosphoserine" evidence="12">
    <location>
        <position position="383"/>
    </location>
</feature>
<feature type="modified residue" description="Phosphoserine" evidence="10 12">
    <location>
        <position position="642"/>
    </location>
</feature>
<feature type="modified residue" description="Phosphoserine" evidence="12">
    <location>
        <position position="1129"/>
    </location>
</feature>
<feature type="modified residue" description="Phosphoserine" evidence="11 12">
    <location>
        <position position="1144"/>
    </location>
</feature>
<feature type="splice variant" id="VSP_014614" description="In isoform 4." evidence="7 8">
    <location>
        <begin position="1"/>
        <end position="146"/>
    </location>
</feature>
<feature type="splice variant" id="VSP_045574" description="In isoform 5." evidence="6">
    <original>Q</original>
    <variation>QDLQTSVNKSIDTGTLVQSWLRGAA</variation>
    <location>
        <position position="146"/>
    </location>
</feature>
<feature type="splice variant" id="VSP_045575" description="In isoform 5." evidence="6">
    <location>
        <begin position="292"/>
        <end position="293"/>
    </location>
</feature>
<feature type="splice variant" id="VSP_014616" description="In isoform 3." evidence="7">
    <original>GKYCDCC</original>
    <variation>ASSCTNK</variation>
    <location>
        <begin position="786"/>
        <end position="792"/>
    </location>
</feature>
<feature type="splice variant" id="VSP_014617" description="In isoform 3." evidence="7">
    <location>
        <begin position="793"/>
        <end position="1265"/>
    </location>
</feature>
<feature type="splice variant" id="VSP_014615" description="In isoform 2, isoform 5 and isoform 6." evidence="6 7">
    <location>
        <begin position="1167"/>
        <end position="1207"/>
    </location>
</feature>
<feature type="splice variant" id="VSP_047163" description="In isoform 6." evidence="6">
    <original>FCLDSARQTRQRLSINWSNFSLKKATFAAH</original>
    <variation>DGVSPHCPGWSRTPGLK</variation>
    <location>
        <begin position="1236"/>
        <end position="1265"/>
    </location>
</feature>
<feature type="sequence variant" id="VAR_022863" description="In dbSNP:rs17164077." evidence="5">
    <original>M</original>
    <variation>V</variation>
    <location>
        <position position="192"/>
    </location>
</feature>
<feature type="sequence variant" id="VAR_056783" description="In dbSNP:rs17681870." evidence="4">
    <original>I</original>
    <variation>V</variation>
    <location>
        <position position="1115"/>
    </location>
</feature>
<evidence type="ECO:0000250" key="1">
    <source>
        <dbReference type="UniProtKB" id="Q8CGI1"/>
    </source>
</evidence>
<evidence type="ECO:0000255" key="2"/>
<evidence type="ECO:0000256" key="3">
    <source>
        <dbReference type="SAM" id="MobiDB-lite"/>
    </source>
</evidence>
<evidence type="ECO:0000269" key="4">
    <source>
    </source>
</evidence>
<evidence type="ECO:0000269" key="5">
    <source>
    </source>
</evidence>
<evidence type="ECO:0000303" key="6">
    <source>
    </source>
</evidence>
<evidence type="ECO:0000303" key="7">
    <source>
    </source>
</evidence>
<evidence type="ECO:0000303" key="8">
    <source ref="4"/>
</evidence>
<evidence type="ECO:0000305" key="9"/>
<evidence type="ECO:0007744" key="10">
    <source>
    </source>
</evidence>
<evidence type="ECO:0007744" key="11">
    <source>
    </source>
</evidence>
<evidence type="ECO:0007744" key="12">
    <source>
    </source>
</evidence>
<organism>
    <name type="scientific">Homo sapiens</name>
    <name type="common">Human</name>
    <dbReference type="NCBI Taxonomy" id="9606"/>
    <lineage>
        <taxon>Eukaryota</taxon>
        <taxon>Metazoa</taxon>
        <taxon>Chordata</taxon>
        <taxon>Craniata</taxon>
        <taxon>Vertebrata</taxon>
        <taxon>Euteleostomi</taxon>
        <taxon>Mammalia</taxon>
        <taxon>Eutheria</taxon>
        <taxon>Euarchontoglires</taxon>
        <taxon>Primates</taxon>
        <taxon>Haplorrhini</taxon>
        <taxon>Catarrhini</taxon>
        <taxon>Hominidae</taxon>
        <taxon>Homo</taxon>
    </lineage>
</organism>
<name>F193A_HUMAN</name>
<accession>P78312</accession>
<accession>B7ZM85</accession>
<accession>B9EGR0</accession>
<accession>E9PFA1</accession>
<accession>O43607</accession>
<accession>P78311</accession>
<accession>P78313</accession>
<accession>Q9UEG8</accession>
<sequence length="1265" mass="139988">MKVRLLRQLSAAAKVKAPSGLQGPPQAHQFISLLLEEYGALCQAARSISTFLGTLENEHLKKFQVTWELHNKHLFENLVFSEPLLQSNLPALVSQIRLGTTTHDTCSEDTYSTLLQRYQRSEEELRRVAEEWLECQKRIDAYVDEQMTMKTKQRMLTEDWELFKQRRFIEEQLTNKKAVTGENNFTDTMRHMLSSRLSMPDCPNCNYRRRCACDDCSLSHILTCGIMDPPVTDDIHIHQLPLQVDPAPDYLAERSPPSVSSASSGSGSSSPITIQQHPRLILTDSGSAPTFCSDDEDVAPLSAKFADIYPLSNYDDTEVVANMNGIHSELNGGGENMALKDESPQISSTSSSSSEADDEEADGESSGEPPGAPKEDGVLGSRSPRTEESKADSPPPSYPTQQAEQAPNTCECHVCKQEASGLTPSAMTAGALPPGHQFLSPEKPTHPALHLYPHIHGHVPLHTVPHLPRPLIHPTLYATPPFTHSKALPPAPVQNHTNKHQVFNASLQDHIYPSCFGNTPEWNSSKFISLWGSEVMNDKNWNPGTFLPDTISGSEILGPTLSETRPEALPPPSSNETPAVSDSKEKKNAAKKKCLYNFQDAFMEANKVVMATSSATSSVSCTATTVQSSNSQFRVSSKRPPSVGDVFHGISKEDHRHSAPAAPRNSPTGLAPLPALSPAALSPAALSPASTPHLANLAAPSFPKTATTTPGFVDTRKSFCPAPLPPATDGSISAPPSVCSDPDCEGHRCENGVYDPQQDDGDESADEDSCSEHSSSTSTSTNQKEGKYCDCCYCEFFGHGGPPAAPTSRNYAEMREKLRLRLTKRKEEQPKKMDQISERESVVDHRRVEDLLQFINSSETKPVSSTRAAKRARHKQRKLEEKARLEAEARAREHLHLQEEQRRREEEEDEEEEEDRFKEEFQRLQELQKLRAVKKKKKERPSKDCPKLDMLTRNFQAATESVPNSGNIHNGSLEQTEEPETSSHSPSRHMNHSEPRPGLGADGDAADPVDTRDSKFLLPKEVNGKQHEPLSFFFDIMQHHKEGNGKQKLRQTSKASSEPARRPTEPPKATEGQSKPRAQTESKAKVVDLMSITEQKREERKVNSNNNNKKQLNHIKDEKSNPTPMEPTSPGEHQQNSKLVLAESPQPKGKNKKNKKKKGDRVNNSIDGVSLLLPSLGYNGAILAHCNLRLPGSSDCAASASQVVGITDDVFLPKDIDLDSVDMDETEREVEYFKRFCLDSARQTRQRLSINWSNFSLKKATFAAH</sequence>
<keyword id="KW-0025">Alternative splicing</keyword>
<keyword id="KW-0175">Coiled coil</keyword>
<keyword id="KW-0597">Phosphoprotein</keyword>
<keyword id="KW-1267">Proteomics identification</keyword>
<keyword id="KW-1185">Reference proteome</keyword>
<comment type="alternative products">
    <event type="alternative splicing"/>
    <isoform>
        <id>P78312-1</id>
        <name>1</name>
        <name>RES4-22B</name>
        <sequence type="displayed"/>
    </isoform>
    <isoform>
        <id>P78312-2</id>
        <name>2</name>
        <name>RES4-22A</name>
        <sequence type="described" ref="VSP_014615"/>
    </isoform>
    <isoform>
        <id>P78312-3</id>
        <name>3</name>
        <name>RES4-22C</name>
        <sequence type="described" ref="VSP_014616 VSP_014617"/>
    </isoform>
    <isoform>
        <id>P78312-4</id>
        <name>4</name>
        <name>RES4-22D</name>
        <sequence type="described" ref="VSP_014614"/>
    </isoform>
    <isoform>
        <id>P78312-5</id>
        <name>5</name>
        <sequence type="described" ref="VSP_045574 VSP_045575 VSP_014615"/>
    </isoform>
    <isoform>
        <id>P78312-6</id>
        <name>6</name>
        <sequence type="described" ref="VSP_014615 VSP_047163"/>
    </isoform>
</comment>
<comment type="miscellaneous">
    <molecule>Isoform 3</molecule>
    <text evidence="9">May be produced at very low levels due to a premature stop codon in the mRNA, leading to nonsense-mediated mRNA decay.</text>
</comment>
<comment type="similarity">
    <text evidence="9">Belongs to the FAM193 family.</text>
</comment>
<reference key="1">
    <citation type="journal article" date="1998" name="DNA Res.">
        <title>The primary structure and genomic organization of five novel transcripts located close to the Huntington's disease gene on human chromosome 4p16.3.</title>
        <authorList>
            <person name="Hadano S."/>
            <person name="Ishida Y."/>
            <person name="Ikeda J.-E."/>
        </authorList>
    </citation>
    <scope>NUCLEOTIDE SEQUENCE [MRNA] (ISOFORMS 1; 2; 3 AND 4)</scope>
    <scope>VARIANT VAL-192</scope>
    <source>
        <tissue>Fetal brain</tissue>
    </source>
</reference>
<reference key="2">
    <citation type="journal article" date="2005" name="Nature">
        <title>Generation and annotation of the DNA sequences of human chromosomes 2 and 4.</title>
        <authorList>
            <person name="Hillier L.W."/>
            <person name="Graves T.A."/>
            <person name="Fulton R.S."/>
            <person name="Fulton L.A."/>
            <person name="Pepin K.H."/>
            <person name="Minx P."/>
            <person name="Wagner-McPherson C."/>
            <person name="Layman D."/>
            <person name="Wylie K."/>
            <person name="Sekhon M."/>
            <person name="Becker M.C."/>
            <person name="Fewell G.A."/>
            <person name="Delehaunty K.D."/>
            <person name="Miner T.L."/>
            <person name="Nash W.E."/>
            <person name="Kremitzki C."/>
            <person name="Oddy L."/>
            <person name="Du H."/>
            <person name="Sun H."/>
            <person name="Bradshaw-Cordum H."/>
            <person name="Ali J."/>
            <person name="Carter J."/>
            <person name="Cordes M."/>
            <person name="Harris A."/>
            <person name="Isak A."/>
            <person name="van Brunt A."/>
            <person name="Nguyen C."/>
            <person name="Du F."/>
            <person name="Courtney L."/>
            <person name="Kalicki J."/>
            <person name="Ozersky P."/>
            <person name="Abbott S."/>
            <person name="Armstrong J."/>
            <person name="Belter E.A."/>
            <person name="Caruso L."/>
            <person name="Cedroni M."/>
            <person name="Cotton M."/>
            <person name="Davidson T."/>
            <person name="Desai A."/>
            <person name="Elliott G."/>
            <person name="Erb T."/>
            <person name="Fronick C."/>
            <person name="Gaige T."/>
            <person name="Haakenson W."/>
            <person name="Haglund K."/>
            <person name="Holmes A."/>
            <person name="Harkins R."/>
            <person name="Kim K."/>
            <person name="Kruchowski S.S."/>
            <person name="Strong C.M."/>
            <person name="Grewal N."/>
            <person name="Goyea E."/>
            <person name="Hou S."/>
            <person name="Levy A."/>
            <person name="Martinka S."/>
            <person name="Mead K."/>
            <person name="McLellan M.D."/>
            <person name="Meyer R."/>
            <person name="Randall-Maher J."/>
            <person name="Tomlinson C."/>
            <person name="Dauphin-Kohlberg S."/>
            <person name="Kozlowicz-Reilly A."/>
            <person name="Shah N."/>
            <person name="Swearengen-Shahid S."/>
            <person name="Snider J."/>
            <person name="Strong J.T."/>
            <person name="Thompson J."/>
            <person name="Yoakum M."/>
            <person name="Leonard S."/>
            <person name="Pearman C."/>
            <person name="Trani L."/>
            <person name="Radionenko M."/>
            <person name="Waligorski J.E."/>
            <person name="Wang C."/>
            <person name="Rock S.M."/>
            <person name="Tin-Wollam A.-M."/>
            <person name="Maupin R."/>
            <person name="Latreille P."/>
            <person name="Wendl M.C."/>
            <person name="Yang S.-P."/>
            <person name="Pohl C."/>
            <person name="Wallis J.W."/>
            <person name="Spieth J."/>
            <person name="Bieri T.A."/>
            <person name="Berkowicz N."/>
            <person name="Nelson J.O."/>
            <person name="Osborne J."/>
            <person name="Ding L."/>
            <person name="Meyer R."/>
            <person name="Sabo A."/>
            <person name="Shotland Y."/>
            <person name="Sinha P."/>
            <person name="Wohldmann P.E."/>
            <person name="Cook L.L."/>
            <person name="Hickenbotham M.T."/>
            <person name="Eldred J."/>
            <person name="Williams D."/>
            <person name="Jones T.A."/>
            <person name="She X."/>
            <person name="Ciccarelli F.D."/>
            <person name="Izaurralde E."/>
            <person name="Taylor J."/>
            <person name="Schmutz J."/>
            <person name="Myers R.M."/>
            <person name="Cox D.R."/>
            <person name="Huang X."/>
            <person name="McPherson J.D."/>
            <person name="Mardis E.R."/>
            <person name="Clifton S.W."/>
            <person name="Warren W.C."/>
            <person name="Chinwalla A.T."/>
            <person name="Eddy S.R."/>
            <person name="Marra M.A."/>
            <person name="Ovcharenko I."/>
            <person name="Furey T.S."/>
            <person name="Miller W."/>
            <person name="Eichler E.E."/>
            <person name="Bork P."/>
            <person name="Suyama M."/>
            <person name="Torrents D."/>
            <person name="Waterston R.H."/>
            <person name="Wilson R.K."/>
        </authorList>
    </citation>
    <scope>NUCLEOTIDE SEQUENCE [LARGE SCALE GENOMIC DNA]</scope>
</reference>
<reference key="3">
    <citation type="journal article" date="2004" name="Genome Res.">
        <title>The status, quality, and expansion of the NIH full-length cDNA project: the Mammalian Gene Collection (MGC).</title>
        <authorList>
            <consortium name="The MGC Project Team"/>
        </authorList>
    </citation>
    <scope>NUCLEOTIDE SEQUENCE [LARGE SCALE MRNA] (ISOFORMS 5 AND 6)</scope>
    <scope>VARIANT VAL-1115</scope>
    <source>
        <tissue>Testis</tissue>
    </source>
</reference>
<reference key="4">
    <citation type="submission" date="1998-01" db="EMBL/GenBank/DDBJ databases">
        <title>Comparison of exon trapping and sequence-based methods of gene finding.</title>
        <authorList>
            <person name="Pribill I."/>
            <person name="Barnes G.T."/>
            <person name="Chen J."/>
            <person name="Church D."/>
            <person name="Buckler A."/>
            <person name="Baxendale S."/>
            <person name="Bates G.P."/>
            <person name="Lehrach H."/>
            <person name="Gusella M.J."/>
            <person name="Duyao M.P."/>
            <person name="Ambrose C.M."/>
            <person name="MacDonald M.E."/>
            <person name="Gusella J.F."/>
        </authorList>
    </citation>
    <scope>NUCLEOTIDE SEQUENCE [MRNA] OF 1-878 (ISOFORM 4)</scope>
</reference>
<reference key="5">
    <citation type="journal article" date="2008" name="Proc. Natl. Acad. Sci. U.S.A.">
        <title>A quantitative atlas of mitotic phosphorylation.</title>
        <authorList>
            <person name="Dephoure N."/>
            <person name="Zhou C."/>
            <person name="Villen J."/>
            <person name="Beausoleil S.A."/>
            <person name="Bakalarski C.E."/>
            <person name="Elledge S.J."/>
            <person name="Gygi S.P."/>
        </authorList>
    </citation>
    <scope>PHOSPHORYLATION [LARGE SCALE ANALYSIS] AT SER-642</scope>
    <scope>IDENTIFICATION BY MASS SPECTROMETRY [LARGE SCALE ANALYSIS]</scope>
    <source>
        <tissue>Cervix carcinoma</tissue>
    </source>
</reference>
<reference key="6">
    <citation type="journal article" date="2009" name="Anal. Chem.">
        <title>Lys-N and trypsin cover complementary parts of the phosphoproteome in a refined SCX-based approach.</title>
        <authorList>
            <person name="Gauci S."/>
            <person name="Helbig A.O."/>
            <person name="Slijper M."/>
            <person name="Krijgsveld J."/>
            <person name="Heck A.J."/>
            <person name="Mohammed S."/>
        </authorList>
    </citation>
    <scope>IDENTIFICATION BY MASS SPECTROMETRY [LARGE SCALE ANALYSIS]</scope>
</reference>
<reference key="7">
    <citation type="journal article" date="2009" name="Sci. Signal.">
        <title>Quantitative phosphoproteomic analysis of T cell receptor signaling reveals system-wide modulation of protein-protein interactions.</title>
        <authorList>
            <person name="Mayya V."/>
            <person name="Lundgren D.H."/>
            <person name="Hwang S.-I."/>
            <person name="Rezaul K."/>
            <person name="Wu L."/>
            <person name="Eng J.K."/>
            <person name="Rodionov V."/>
            <person name="Han D.K."/>
        </authorList>
    </citation>
    <scope>IDENTIFICATION BY MASS SPECTROMETRY [LARGE SCALE ANALYSIS]</scope>
    <source>
        <tissue>Leukemic T-cell</tissue>
    </source>
</reference>
<reference key="8">
    <citation type="journal article" date="2011" name="Sci. Signal.">
        <title>System-wide temporal characterization of the proteome and phosphoproteome of human embryonic stem cell differentiation.</title>
        <authorList>
            <person name="Rigbolt K.T."/>
            <person name="Prokhorova T.A."/>
            <person name="Akimov V."/>
            <person name="Henningsen J."/>
            <person name="Johansen P.T."/>
            <person name="Kratchmarova I."/>
            <person name="Kassem M."/>
            <person name="Mann M."/>
            <person name="Olsen J.V."/>
            <person name="Blagoev B."/>
        </authorList>
    </citation>
    <scope>PHOSPHORYLATION [LARGE SCALE ANALYSIS] AT SER-1144</scope>
    <scope>IDENTIFICATION BY MASS SPECTROMETRY [LARGE SCALE ANALYSIS]</scope>
</reference>
<reference key="9">
    <citation type="journal article" date="2013" name="J. Proteome Res.">
        <title>Toward a comprehensive characterization of a human cancer cell phosphoproteome.</title>
        <authorList>
            <person name="Zhou H."/>
            <person name="Di Palma S."/>
            <person name="Preisinger C."/>
            <person name="Peng M."/>
            <person name="Polat A.N."/>
            <person name="Heck A.J."/>
            <person name="Mohammed S."/>
        </authorList>
    </citation>
    <scope>PHOSPHORYLATION [LARGE SCALE ANALYSIS] AT SER-383; SER-642; SER-1129 AND SER-1144</scope>
    <scope>IDENTIFICATION BY MASS SPECTROMETRY [LARGE SCALE ANALYSIS]</scope>
    <source>
        <tissue>Cervix carcinoma</tissue>
        <tissue>Erythroleukemia</tissue>
    </source>
</reference>
<proteinExistence type="evidence at protein level"/>